<proteinExistence type="inferred from homology"/>
<gene>
    <name evidence="1" type="primary">cof</name>
    <name type="ordered locus">ECUMN_0486</name>
</gene>
<sequence>MARLAAFDMDGTLLMPDHHLGEKTLSTLARLRERDITLTFATGRHALEMQHILGALSLDAYLITGNGTRVHSLEGELLHRDDLPADVAELVLYQQWDTRASMHIFNDDGWFTGKEIPALLQAFVYSGFRYQIIDVKKMPLGSVTKICFCGDHDDLTRLQIQLYEALGERAHLCFSATDCLEVLPVGCNKGAALTVLTQHLGLSLRDCMAFGDAMNDREMLGCVGSGFIMGNAMPQLRAELPHLPVIGHCRNQAVSHYLTHWLDYPHLPYSPE</sequence>
<keyword id="KW-0378">Hydrolase</keyword>
<keyword id="KW-0460">Magnesium</keyword>
<keyword id="KW-0479">Metal-binding</keyword>
<reference key="1">
    <citation type="journal article" date="2009" name="PLoS Genet.">
        <title>Organised genome dynamics in the Escherichia coli species results in highly diverse adaptive paths.</title>
        <authorList>
            <person name="Touchon M."/>
            <person name="Hoede C."/>
            <person name="Tenaillon O."/>
            <person name="Barbe V."/>
            <person name="Baeriswyl S."/>
            <person name="Bidet P."/>
            <person name="Bingen E."/>
            <person name="Bonacorsi S."/>
            <person name="Bouchier C."/>
            <person name="Bouvet O."/>
            <person name="Calteau A."/>
            <person name="Chiapello H."/>
            <person name="Clermont O."/>
            <person name="Cruveiller S."/>
            <person name="Danchin A."/>
            <person name="Diard M."/>
            <person name="Dossat C."/>
            <person name="Karoui M.E."/>
            <person name="Frapy E."/>
            <person name="Garry L."/>
            <person name="Ghigo J.M."/>
            <person name="Gilles A.M."/>
            <person name="Johnson J."/>
            <person name="Le Bouguenec C."/>
            <person name="Lescat M."/>
            <person name="Mangenot S."/>
            <person name="Martinez-Jehanne V."/>
            <person name="Matic I."/>
            <person name="Nassif X."/>
            <person name="Oztas S."/>
            <person name="Petit M.A."/>
            <person name="Pichon C."/>
            <person name="Rouy Z."/>
            <person name="Ruf C.S."/>
            <person name="Schneider D."/>
            <person name="Tourret J."/>
            <person name="Vacherie B."/>
            <person name="Vallenet D."/>
            <person name="Medigue C."/>
            <person name="Rocha E.P.C."/>
            <person name="Denamur E."/>
        </authorList>
    </citation>
    <scope>NUCLEOTIDE SEQUENCE [LARGE SCALE GENOMIC DNA]</scope>
    <source>
        <strain>UMN026 / ExPEC</strain>
    </source>
</reference>
<name>COF_ECOLU</name>
<comment type="function">
    <text evidence="1">Catalyzes the hydrolysis of 4-amino-2-methyl-5-hydroxymethylpyrimidine pyrophosphate (HMP-PP) to 4-amino-2-methyl-5-hydroxymethylpyrimidine phosphate (HMP-P).</text>
</comment>
<comment type="catalytic activity">
    <reaction evidence="1">
        <text>4-amino-2-methyl-5-(diphosphooxymethyl)pyrimidine + H2O = 4-amino-2-methyl-5-(phosphooxymethyl)pyrimidine + phosphate + H(+)</text>
        <dbReference type="Rhea" id="RHEA:27914"/>
        <dbReference type="ChEBI" id="CHEBI:15377"/>
        <dbReference type="ChEBI" id="CHEBI:15378"/>
        <dbReference type="ChEBI" id="CHEBI:43474"/>
        <dbReference type="ChEBI" id="CHEBI:57841"/>
        <dbReference type="ChEBI" id="CHEBI:58354"/>
    </reaction>
</comment>
<comment type="cofactor">
    <cofactor evidence="1">
        <name>Mg(2+)</name>
        <dbReference type="ChEBI" id="CHEBI:18420"/>
    </cofactor>
</comment>
<comment type="similarity">
    <text evidence="1">Belongs to the HAD-like hydrolase superfamily. Cof family.</text>
</comment>
<organism>
    <name type="scientific">Escherichia coli O17:K52:H18 (strain UMN026 / ExPEC)</name>
    <dbReference type="NCBI Taxonomy" id="585056"/>
    <lineage>
        <taxon>Bacteria</taxon>
        <taxon>Pseudomonadati</taxon>
        <taxon>Pseudomonadota</taxon>
        <taxon>Gammaproteobacteria</taxon>
        <taxon>Enterobacterales</taxon>
        <taxon>Enterobacteriaceae</taxon>
        <taxon>Escherichia</taxon>
    </lineage>
</organism>
<evidence type="ECO:0000255" key="1">
    <source>
        <dbReference type="HAMAP-Rule" id="MF_01847"/>
    </source>
</evidence>
<feature type="chain" id="PRO_1000188502" description="HMP-PP phosphatase">
    <location>
        <begin position="1"/>
        <end position="272"/>
    </location>
</feature>
<feature type="active site" description="Nucleophile" evidence="1">
    <location>
        <position position="8"/>
    </location>
</feature>
<feature type="binding site" evidence="1">
    <location>
        <position position="8"/>
    </location>
    <ligand>
        <name>Mg(2+)</name>
        <dbReference type="ChEBI" id="CHEBI:18420"/>
    </ligand>
</feature>
<feature type="binding site" evidence="1">
    <location>
        <position position="10"/>
    </location>
    <ligand>
        <name>Mg(2+)</name>
        <dbReference type="ChEBI" id="CHEBI:18420"/>
    </ligand>
</feature>
<feature type="binding site" evidence="1">
    <location>
        <position position="212"/>
    </location>
    <ligand>
        <name>Mg(2+)</name>
        <dbReference type="ChEBI" id="CHEBI:18420"/>
    </ligand>
</feature>
<accession>B7N900</accession>
<protein>
    <recommendedName>
        <fullName evidence="1">HMP-PP phosphatase</fullName>
        <ecNumber evidence="1">3.6.1.-</ecNumber>
    </recommendedName>
</protein>
<dbReference type="EC" id="3.6.1.-" evidence="1"/>
<dbReference type="EMBL" id="CU928163">
    <property type="protein sequence ID" value="CAR11701.1"/>
    <property type="molecule type" value="Genomic_DNA"/>
</dbReference>
<dbReference type="RefSeq" id="WP_001309304.1">
    <property type="nucleotide sequence ID" value="NC_011751.1"/>
</dbReference>
<dbReference type="RefSeq" id="YP_002411249.1">
    <property type="nucleotide sequence ID" value="NC_011751.1"/>
</dbReference>
<dbReference type="SMR" id="B7N900"/>
<dbReference type="STRING" id="585056.ECUMN_0486"/>
<dbReference type="KEGG" id="eum:ECUMN_0486"/>
<dbReference type="PATRIC" id="fig|585056.7.peg.691"/>
<dbReference type="HOGENOM" id="CLU_044146_5_2_6"/>
<dbReference type="Proteomes" id="UP000007097">
    <property type="component" value="Chromosome"/>
</dbReference>
<dbReference type="GO" id="GO:0002145">
    <property type="term" value="F:4-amino-5-hydroxymethyl-2-methylpyrimidine diphosphatase activity"/>
    <property type="evidence" value="ECO:0007669"/>
    <property type="project" value="RHEA"/>
</dbReference>
<dbReference type="GO" id="GO:0000287">
    <property type="term" value="F:magnesium ion binding"/>
    <property type="evidence" value="ECO:0000250"/>
    <property type="project" value="UniProtKB"/>
</dbReference>
<dbReference type="GO" id="GO:0016791">
    <property type="term" value="F:phosphatase activity"/>
    <property type="evidence" value="ECO:0000250"/>
    <property type="project" value="UniProtKB"/>
</dbReference>
<dbReference type="CDD" id="cd07516">
    <property type="entry name" value="HAD_Pase"/>
    <property type="match status" value="1"/>
</dbReference>
<dbReference type="FunFam" id="3.30.1240.10:FF:000002">
    <property type="entry name" value="HMP-PP phosphatase"/>
    <property type="match status" value="1"/>
</dbReference>
<dbReference type="Gene3D" id="3.30.1240.10">
    <property type="match status" value="1"/>
</dbReference>
<dbReference type="Gene3D" id="3.40.50.1000">
    <property type="entry name" value="HAD superfamily/HAD-like"/>
    <property type="match status" value="1"/>
</dbReference>
<dbReference type="HAMAP" id="MF_01847">
    <property type="entry name" value="HMP_PP_phosphat"/>
    <property type="match status" value="1"/>
</dbReference>
<dbReference type="InterPro" id="IPR000150">
    <property type="entry name" value="Cof"/>
</dbReference>
<dbReference type="InterPro" id="IPR036412">
    <property type="entry name" value="HAD-like_sf"/>
</dbReference>
<dbReference type="InterPro" id="IPR006379">
    <property type="entry name" value="HAD-SF_hydro_IIB"/>
</dbReference>
<dbReference type="InterPro" id="IPR023214">
    <property type="entry name" value="HAD_sf"/>
</dbReference>
<dbReference type="InterPro" id="IPR023938">
    <property type="entry name" value="HMP-PP_phosphatase"/>
</dbReference>
<dbReference type="NCBIfam" id="TIGR00099">
    <property type="entry name" value="Cof-subfamily"/>
    <property type="match status" value="1"/>
</dbReference>
<dbReference type="NCBIfam" id="TIGR01484">
    <property type="entry name" value="HAD-SF-IIB"/>
    <property type="match status" value="1"/>
</dbReference>
<dbReference type="NCBIfam" id="NF011705">
    <property type="entry name" value="PRK15126.1"/>
    <property type="match status" value="1"/>
</dbReference>
<dbReference type="PANTHER" id="PTHR47267">
    <property type="match status" value="1"/>
</dbReference>
<dbReference type="PANTHER" id="PTHR47267:SF2">
    <property type="entry name" value="HMP-PP PHOSPHATASE"/>
    <property type="match status" value="1"/>
</dbReference>
<dbReference type="Pfam" id="PF08282">
    <property type="entry name" value="Hydrolase_3"/>
    <property type="match status" value="1"/>
</dbReference>
<dbReference type="SFLD" id="SFLDG01140">
    <property type="entry name" value="C2.B:_Phosphomannomutase_and_P"/>
    <property type="match status" value="1"/>
</dbReference>
<dbReference type="SFLD" id="SFLDS00003">
    <property type="entry name" value="Haloacid_Dehalogenase"/>
    <property type="match status" value="1"/>
</dbReference>
<dbReference type="SUPFAM" id="SSF56784">
    <property type="entry name" value="HAD-like"/>
    <property type="match status" value="1"/>
</dbReference>
<dbReference type="PROSITE" id="PS01228">
    <property type="entry name" value="COF_1"/>
    <property type="match status" value="1"/>
</dbReference>
<dbReference type="PROSITE" id="PS01229">
    <property type="entry name" value="COF_2"/>
    <property type="match status" value="1"/>
</dbReference>